<feature type="chain" id="PRO_0000390703" description="Serine/threonine-protein phosphatase Pgam5, mitochondrial">
    <location>
        <begin position="1"/>
        <end position="289"/>
    </location>
</feature>
<feature type="transmembrane region" description="Helical" evidence="3">
    <location>
        <begin position="7"/>
        <end position="23"/>
    </location>
</feature>
<evidence type="ECO:0000250" key="1"/>
<evidence type="ECO:0000250" key="2">
    <source>
        <dbReference type="UniProtKB" id="O46084"/>
    </source>
</evidence>
<evidence type="ECO:0000255" key="3"/>
<evidence type="ECO:0000312" key="4">
    <source>
        <dbReference type="EMBL" id="EDV34235.1"/>
    </source>
</evidence>
<reference evidence="4" key="1">
    <citation type="journal article" date="2007" name="Nature">
        <title>Evolution of genes and genomes on the Drosophila phylogeny.</title>
        <authorList>
            <consortium name="Drosophila 12 genomes consortium"/>
        </authorList>
    </citation>
    <scope>NUCLEOTIDE SEQUENCE [LARGE SCALE GENOMIC DNA]</scope>
    <source>
        <strain evidence="4">Tucson 14024-0371.13</strain>
    </source>
</reference>
<name>PGAM5_DROAN</name>
<proteinExistence type="inferred from homology"/>
<organism>
    <name type="scientific">Drosophila ananassae</name>
    <name type="common">Fruit fly</name>
    <dbReference type="NCBI Taxonomy" id="7217"/>
    <lineage>
        <taxon>Eukaryota</taxon>
        <taxon>Metazoa</taxon>
        <taxon>Ecdysozoa</taxon>
        <taxon>Arthropoda</taxon>
        <taxon>Hexapoda</taxon>
        <taxon>Insecta</taxon>
        <taxon>Pterygota</taxon>
        <taxon>Neoptera</taxon>
        <taxon>Endopterygota</taxon>
        <taxon>Diptera</taxon>
        <taxon>Brachycera</taxon>
        <taxon>Muscomorpha</taxon>
        <taxon>Ephydroidea</taxon>
        <taxon>Drosophilidae</taxon>
        <taxon>Drosophila</taxon>
        <taxon>Sophophora</taxon>
    </lineage>
</organism>
<accession>B3MR30</accession>
<gene>
    <name evidence="2" type="primary">Pgam5</name>
    <name type="ORF">GF21073</name>
</gene>
<sequence length="289" mass="32959">MRKLSSLVCGAGAGLAAFYLSRLRDPQKAAHSSWTNSEKPVDACGLWDSNWDCRDPRLMVRPLKNTQPEEENRFNADLEKAKPKKARHIILVRHGEYLDVGESDATHHLTERGRKQAQFTGQRLSELGIQWDKVIASTMVRAQETADIILKEIKYDKEKVVNCVYLREGAPIPPQPPVGHWKPEASQFYRDGARIEAAFRRYFHRAYPDQDKESYTLIVGHGNVIRYFVCRALQFPPEGWLRISINHASITWLTISPSGNVSIKYLGDSGFMPVQYLTNRIPRDAKNVV</sequence>
<comment type="function">
    <text evidence="2">Displays phosphatase activity for serine/threonine residues, and dephosphorylates and activates Pk92B kinase. Has apparently no phosphoglycerate mutase activity (By similarity).</text>
</comment>
<comment type="catalytic activity">
    <reaction>
        <text>O-phospho-L-seryl-[protein] + H2O = L-seryl-[protein] + phosphate</text>
        <dbReference type="Rhea" id="RHEA:20629"/>
        <dbReference type="Rhea" id="RHEA-COMP:9863"/>
        <dbReference type="Rhea" id="RHEA-COMP:11604"/>
        <dbReference type="ChEBI" id="CHEBI:15377"/>
        <dbReference type="ChEBI" id="CHEBI:29999"/>
        <dbReference type="ChEBI" id="CHEBI:43474"/>
        <dbReference type="ChEBI" id="CHEBI:83421"/>
        <dbReference type="EC" id="3.1.3.16"/>
    </reaction>
</comment>
<comment type="catalytic activity">
    <reaction>
        <text>O-phospho-L-threonyl-[protein] + H2O = L-threonyl-[protein] + phosphate</text>
        <dbReference type="Rhea" id="RHEA:47004"/>
        <dbReference type="Rhea" id="RHEA-COMP:11060"/>
        <dbReference type="Rhea" id="RHEA-COMP:11605"/>
        <dbReference type="ChEBI" id="CHEBI:15377"/>
        <dbReference type="ChEBI" id="CHEBI:30013"/>
        <dbReference type="ChEBI" id="CHEBI:43474"/>
        <dbReference type="ChEBI" id="CHEBI:61977"/>
        <dbReference type="EC" id="3.1.3.16"/>
    </reaction>
</comment>
<comment type="subunit">
    <text evidence="2">Interacts with Pk92B/ASK1.</text>
</comment>
<comment type="subcellular location">
    <subcellularLocation>
        <location evidence="2 3">Mitochondrion outer membrane</location>
        <topology evidence="1">Single-pass membrane protein</topology>
    </subcellularLocation>
</comment>
<comment type="similarity">
    <text evidence="3">Belongs to the phosphoglycerate mutase family. BPG-dependent PGAM subfamily.</text>
</comment>
<keyword id="KW-0378">Hydrolase</keyword>
<keyword id="KW-0472">Membrane</keyword>
<keyword id="KW-0496">Mitochondrion</keyword>
<keyword id="KW-1000">Mitochondrion outer membrane</keyword>
<keyword id="KW-1185">Reference proteome</keyword>
<keyword id="KW-0812">Transmembrane</keyword>
<keyword id="KW-1133">Transmembrane helix</keyword>
<protein>
    <recommendedName>
        <fullName evidence="2">Serine/threonine-protein phosphatase Pgam5, mitochondrial</fullName>
        <ecNumber>3.1.3.16</ecNumber>
    </recommendedName>
    <alternativeName>
        <fullName evidence="2">Phosphoglycerate mutase family member 5 homolog</fullName>
    </alternativeName>
</protein>
<dbReference type="EC" id="3.1.3.16"/>
<dbReference type="EMBL" id="CH902622">
    <property type="protein sequence ID" value="EDV34235.1"/>
    <property type="molecule type" value="Genomic_DNA"/>
</dbReference>
<dbReference type="SMR" id="B3MR30"/>
<dbReference type="FunCoup" id="B3MR30">
    <property type="interactions" value="1029"/>
</dbReference>
<dbReference type="STRING" id="7217.B3MR30"/>
<dbReference type="EnsemblMetazoa" id="FBtr0125773">
    <property type="protein sequence ID" value="FBpp0124265"/>
    <property type="gene ID" value="FBgn0098078"/>
</dbReference>
<dbReference type="EnsemblMetazoa" id="XM_001963750.4">
    <property type="protein sequence ID" value="XP_001963786.1"/>
    <property type="gene ID" value="LOC6503762"/>
</dbReference>
<dbReference type="GeneID" id="6503762"/>
<dbReference type="KEGG" id="dan:6503762"/>
<dbReference type="CTD" id="192111"/>
<dbReference type="eggNOG" id="KOG4609">
    <property type="taxonomic scope" value="Eukaryota"/>
</dbReference>
<dbReference type="HOGENOM" id="CLU_063130_0_1_1"/>
<dbReference type="InParanoid" id="B3MR30"/>
<dbReference type="OMA" id="MPMEMIT"/>
<dbReference type="OrthoDB" id="2118094at2759"/>
<dbReference type="PhylomeDB" id="B3MR30"/>
<dbReference type="Proteomes" id="UP000007801">
    <property type="component" value="Unassembled WGS sequence"/>
</dbReference>
<dbReference type="GO" id="GO:0005741">
    <property type="term" value="C:mitochondrial outer membrane"/>
    <property type="evidence" value="ECO:0007669"/>
    <property type="project" value="UniProtKB-SubCell"/>
</dbReference>
<dbReference type="GO" id="GO:0019900">
    <property type="term" value="F:kinase binding"/>
    <property type="evidence" value="ECO:0007669"/>
    <property type="project" value="EnsemblMetazoa"/>
</dbReference>
<dbReference type="GO" id="GO:0004721">
    <property type="term" value="F:phosphoprotein phosphatase activity"/>
    <property type="evidence" value="ECO:0000250"/>
    <property type="project" value="UniProtKB"/>
</dbReference>
<dbReference type="GO" id="GO:0043539">
    <property type="term" value="F:protein serine/threonine kinase activator activity"/>
    <property type="evidence" value="ECO:0007669"/>
    <property type="project" value="EnsemblMetazoa"/>
</dbReference>
<dbReference type="GO" id="GO:0004722">
    <property type="term" value="F:protein serine/threonine phosphatase activity"/>
    <property type="evidence" value="ECO:0007669"/>
    <property type="project" value="UniProtKB-EC"/>
</dbReference>
<dbReference type="GO" id="GO:0090141">
    <property type="term" value="P:positive regulation of mitochondrial fission"/>
    <property type="evidence" value="ECO:0007669"/>
    <property type="project" value="EnsemblMetazoa"/>
</dbReference>
<dbReference type="GO" id="GO:0010636">
    <property type="term" value="P:positive regulation of mitochondrial fusion"/>
    <property type="evidence" value="ECO:0007669"/>
    <property type="project" value="EnsemblMetazoa"/>
</dbReference>
<dbReference type="GO" id="GO:0006470">
    <property type="term" value="P:protein dephosphorylation"/>
    <property type="evidence" value="ECO:0000250"/>
    <property type="project" value="UniProtKB"/>
</dbReference>
<dbReference type="GO" id="GO:0072347">
    <property type="term" value="P:response to anesthetic"/>
    <property type="evidence" value="ECO:0007669"/>
    <property type="project" value="EnsemblMetazoa"/>
</dbReference>
<dbReference type="GO" id="GO:0009408">
    <property type="term" value="P:response to heat"/>
    <property type="evidence" value="ECO:0007669"/>
    <property type="project" value="EnsemblMetazoa"/>
</dbReference>
<dbReference type="CDD" id="cd07067">
    <property type="entry name" value="HP_PGM_like"/>
    <property type="match status" value="1"/>
</dbReference>
<dbReference type="FunFam" id="3.40.50.1240:FF:000009">
    <property type="entry name" value="serine/threonine-protein phosphatase PGAM5, mitochondrial isoform X1"/>
    <property type="match status" value="1"/>
</dbReference>
<dbReference type="Gene3D" id="3.40.50.1240">
    <property type="entry name" value="Phosphoglycerate mutase-like"/>
    <property type="match status" value="1"/>
</dbReference>
<dbReference type="InterPro" id="IPR013078">
    <property type="entry name" value="His_Pase_superF_clade-1"/>
</dbReference>
<dbReference type="InterPro" id="IPR029033">
    <property type="entry name" value="His_PPase_superfam"/>
</dbReference>
<dbReference type="InterPro" id="IPR051021">
    <property type="entry name" value="Mito_Ser/Thr_phosphatase"/>
</dbReference>
<dbReference type="PANTHER" id="PTHR20935">
    <property type="entry name" value="PHOSPHOGLYCERATE MUTASE-RELATED"/>
    <property type="match status" value="1"/>
</dbReference>
<dbReference type="PANTHER" id="PTHR20935:SF0">
    <property type="entry name" value="SERINE_THREONINE-PROTEIN PHOSPHATASE PGAM5, MITOCHONDRIAL"/>
    <property type="match status" value="1"/>
</dbReference>
<dbReference type="Pfam" id="PF00300">
    <property type="entry name" value="His_Phos_1"/>
    <property type="match status" value="2"/>
</dbReference>
<dbReference type="SMART" id="SM00855">
    <property type="entry name" value="PGAM"/>
    <property type="match status" value="1"/>
</dbReference>
<dbReference type="SUPFAM" id="SSF53254">
    <property type="entry name" value="Phosphoglycerate mutase-like"/>
    <property type="match status" value="1"/>
</dbReference>